<organism>
    <name type="scientific">Pseudomonas putida (strain ATCC 700007 / DSM 6899 / JCM 31910 / BCRC 17059 / LMG 24140 / F1)</name>
    <dbReference type="NCBI Taxonomy" id="351746"/>
    <lineage>
        <taxon>Bacteria</taxon>
        <taxon>Pseudomonadati</taxon>
        <taxon>Pseudomonadota</taxon>
        <taxon>Gammaproteobacteria</taxon>
        <taxon>Pseudomonadales</taxon>
        <taxon>Pseudomonadaceae</taxon>
        <taxon>Pseudomonas</taxon>
    </lineage>
</organism>
<keyword id="KW-0067">ATP-binding</keyword>
<keyword id="KW-0436">Ligase</keyword>
<keyword id="KW-0547">Nucleotide-binding</keyword>
<keyword id="KW-0658">Purine biosynthesis</keyword>
<comment type="catalytic activity">
    <reaction evidence="1">
        <text>5-amino-1-(5-phospho-D-ribosyl)imidazole-4-carboxylate + L-aspartate + ATP = (2S)-2-[5-amino-1-(5-phospho-beta-D-ribosyl)imidazole-4-carboxamido]succinate + ADP + phosphate + 2 H(+)</text>
        <dbReference type="Rhea" id="RHEA:22628"/>
        <dbReference type="ChEBI" id="CHEBI:15378"/>
        <dbReference type="ChEBI" id="CHEBI:29991"/>
        <dbReference type="ChEBI" id="CHEBI:30616"/>
        <dbReference type="ChEBI" id="CHEBI:43474"/>
        <dbReference type="ChEBI" id="CHEBI:58443"/>
        <dbReference type="ChEBI" id="CHEBI:77657"/>
        <dbReference type="ChEBI" id="CHEBI:456216"/>
        <dbReference type="EC" id="6.3.2.6"/>
    </reaction>
</comment>
<comment type="pathway">
    <text evidence="1">Purine metabolism; IMP biosynthesis via de novo pathway; 5-amino-1-(5-phospho-D-ribosyl)imidazole-4-carboxamide from 5-amino-1-(5-phospho-D-ribosyl)imidazole-4-carboxylate: step 1/2.</text>
</comment>
<comment type="similarity">
    <text evidence="1">Belongs to the SAICAR synthetase family.</text>
</comment>
<name>PUR7_PSEP1</name>
<accession>A5VZX1</accession>
<dbReference type="EC" id="6.3.2.6" evidence="1"/>
<dbReference type="EMBL" id="CP000712">
    <property type="protein sequence ID" value="ABQ77431.1"/>
    <property type="molecule type" value="Genomic_DNA"/>
</dbReference>
<dbReference type="SMR" id="A5VZX1"/>
<dbReference type="KEGG" id="ppf:Pput_1270"/>
<dbReference type="eggNOG" id="COG0152">
    <property type="taxonomic scope" value="Bacteria"/>
</dbReference>
<dbReference type="HOGENOM" id="CLU_061495_2_0_6"/>
<dbReference type="UniPathway" id="UPA00074">
    <property type="reaction ID" value="UER00131"/>
</dbReference>
<dbReference type="GO" id="GO:0005829">
    <property type="term" value="C:cytosol"/>
    <property type="evidence" value="ECO:0007669"/>
    <property type="project" value="TreeGrafter"/>
</dbReference>
<dbReference type="GO" id="GO:0005524">
    <property type="term" value="F:ATP binding"/>
    <property type="evidence" value="ECO:0007669"/>
    <property type="project" value="UniProtKB-KW"/>
</dbReference>
<dbReference type="GO" id="GO:0004639">
    <property type="term" value="F:phosphoribosylaminoimidazolesuccinocarboxamide synthase activity"/>
    <property type="evidence" value="ECO:0007669"/>
    <property type="project" value="UniProtKB-UniRule"/>
</dbReference>
<dbReference type="GO" id="GO:0006189">
    <property type="term" value="P:'de novo' IMP biosynthetic process"/>
    <property type="evidence" value="ECO:0007669"/>
    <property type="project" value="UniProtKB-UniRule"/>
</dbReference>
<dbReference type="GO" id="GO:0009236">
    <property type="term" value="P:cobalamin biosynthetic process"/>
    <property type="evidence" value="ECO:0007669"/>
    <property type="project" value="InterPro"/>
</dbReference>
<dbReference type="CDD" id="cd01415">
    <property type="entry name" value="SAICAR_synt_PurC"/>
    <property type="match status" value="1"/>
</dbReference>
<dbReference type="FunFam" id="3.30.200.20:FF:000086">
    <property type="entry name" value="Phosphoribosylaminoimidazole-succinocarboxamide synthase"/>
    <property type="match status" value="1"/>
</dbReference>
<dbReference type="FunFam" id="3.30.470.20:FF:000006">
    <property type="entry name" value="Phosphoribosylaminoimidazole-succinocarboxamide synthase"/>
    <property type="match status" value="1"/>
</dbReference>
<dbReference type="Gene3D" id="3.30.470.20">
    <property type="entry name" value="ATP-grasp fold, B domain"/>
    <property type="match status" value="1"/>
</dbReference>
<dbReference type="Gene3D" id="3.30.200.20">
    <property type="entry name" value="Phosphorylase Kinase, domain 1"/>
    <property type="match status" value="1"/>
</dbReference>
<dbReference type="HAMAP" id="MF_00137">
    <property type="entry name" value="SAICAR_synth"/>
    <property type="match status" value="1"/>
</dbReference>
<dbReference type="InterPro" id="IPR028923">
    <property type="entry name" value="SAICAR_synt/ADE2_N"/>
</dbReference>
<dbReference type="InterPro" id="IPR033934">
    <property type="entry name" value="SAICAR_synt_PurC"/>
</dbReference>
<dbReference type="InterPro" id="IPR001636">
    <property type="entry name" value="SAICAR_synth"/>
</dbReference>
<dbReference type="InterPro" id="IPR050089">
    <property type="entry name" value="SAICAR_synthetase"/>
</dbReference>
<dbReference type="InterPro" id="IPR018236">
    <property type="entry name" value="SAICAR_synthetase_CS"/>
</dbReference>
<dbReference type="NCBIfam" id="TIGR00081">
    <property type="entry name" value="purC"/>
    <property type="match status" value="1"/>
</dbReference>
<dbReference type="PANTHER" id="PTHR43599">
    <property type="entry name" value="MULTIFUNCTIONAL PROTEIN ADE2"/>
    <property type="match status" value="1"/>
</dbReference>
<dbReference type="PANTHER" id="PTHR43599:SF3">
    <property type="entry name" value="SI:DKEY-6E2.2"/>
    <property type="match status" value="1"/>
</dbReference>
<dbReference type="Pfam" id="PF01259">
    <property type="entry name" value="SAICAR_synt"/>
    <property type="match status" value="1"/>
</dbReference>
<dbReference type="SUPFAM" id="SSF56104">
    <property type="entry name" value="SAICAR synthase-like"/>
    <property type="match status" value="1"/>
</dbReference>
<dbReference type="PROSITE" id="PS01057">
    <property type="entry name" value="SAICAR_SYNTHETASE_1"/>
    <property type="match status" value="1"/>
</dbReference>
<dbReference type="PROSITE" id="PS01058">
    <property type="entry name" value="SAICAR_SYNTHETASE_2"/>
    <property type="match status" value="1"/>
</dbReference>
<protein>
    <recommendedName>
        <fullName evidence="1">Phosphoribosylaminoimidazole-succinocarboxamide synthase</fullName>
        <ecNumber evidence="1">6.3.2.6</ecNumber>
    </recommendedName>
    <alternativeName>
        <fullName evidence="1">SAICAR synthetase</fullName>
    </alternativeName>
</protein>
<reference key="1">
    <citation type="submission" date="2007-05" db="EMBL/GenBank/DDBJ databases">
        <title>Complete sequence of Pseudomonas putida F1.</title>
        <authorList>
            <consortium name="US DOE Joint Genome Institute"/>
            <person name="Copeland A."/>
            <person name="Lucas S."/>
            <person name="Lapidus A."/>
            <person name="Barry K."/>
            <person name="Detter J.C."/>
            <person name="Glavina del Rio T."/>
            <person name="Hammon N."/>
            <person name="Israni S."/>
            <person name="Dalin E."/>
            <person name="Tice H."/>
            <person name="Pitluck S."/>
            <person name="Chain P."/>
            <person name="Malfatti S."/>
            <person name="Shin M."/>
            <person name="Vergez L."/>
            <person name="Schmutz J."/>
            <person name="Larimer F."/>
            <person name="Land M."/>
            <person name="Hauser L."/>
            <person name="Kyrpides N."/>
            <person name="Lykidis A."/>
            <person name="Parales R."/>
            <person name="Richardson P."/>
        </authorList>
    </citation>
    <scope>NUCLEOTIDE SEQUENCE [LARGE SCALE GENOMIC DNA]</scope>
    <source>
        <strain>ATCC 700007 / DSM 6899 / JCM 31910 / BCRC 17059 / LMG 24140 / F1</strain>
    </source>
</reference>
<proteinExistence type="inferred from homology"/>
<gene>
    <name evidence="1" type="primary">purC</name>
    <name type="ordered locus">Pput_1270</name>
</gene>
<feature type="chain" id="PRO_1000018759" description="Phosphoribosylaminoimidazole-succinocarboxamide synthase">
    <location>
        <begin position="1"/>
        <end position="236"/>
    </location>
</feature>
<evidence type="ECO:0000255" key="1">
    <source>
        <dbReference type="HAMAP-Rule" id="MF_00137"/>
    </source>
</evidence>
<sequence>MEKREELYRGKAKSVYKTDDADRLILLFRNDTSAFDGKRIEQLDRKGMVNNKFNAFIMQKLEEAGVPTQFDKLLGDNECLVKKLDMIPVECVVRNYAAGSLVKRLGVEEGIKLEPSTFELFLKNDEKGDPFINESHVVAFGWGTAEQLVEMKKLSLKVNEVLSKLFDDAGLLLVDFKLEFGVFHGQIVLGDEFSPDGCRLWDKETRKKMDKDRFRQGLGDVIEAYEEVAKRLGVPL</sequence>